<sequence>GADVAHKQQSVNHLLYLVTSHYPSLDYSLL</sequence>
<comment type="function">
    <text>Hemocyanins are copper-containing oxygen carriers occurring freely dissolved in the hemolymph of many mollusks and arthropods.</text>
</comment>
<comment type="subcellular location">
    <subcellularLocation>
        <location>Secreted</location>
        <location>Extracellular space</location>
    </subcellularLocation>
</comment>
<comment type="tissue specificity">
    <text>Hemolymph.</text>
</comment>
<comment type="similarity">
    <text evidence="1">Belongs to the tyrosinase family. Hemocyanin subfamily.</text>
</comment>
<name>HCY2_HOMAM</name>
<evidence type="ECO:0000305" key="1"/>
<feature type="chain" id="PRO_0000204273" description="Hemocyanin subunit 2">
    <location>
        <begin position="1"/>
        <end position="30" status="greater than"/>
    </location>
</feature>
<feature type="non-terminal residue" evidence="1">
    <location>
        <position position="30"/>
    </location>
</feature>
<accession>P82297</accession>
<dbReference type="SMR" id="P82297"/>
<dbReference type="GO" id="GO:0005576">
    <property type="term" value="C:extracellular region"/>
    <property type="evidence" value="ECO:0007669"/>
    <property type="project" value="UniProtKB-SubCell"/>
</dbReference>
<dbReference type="GO" id="GO:0005344">
    <property type="term" value="F:oxygen carrier activity"/>
    <property type="evidence" value="ECO:0007669"/>
    <property type="project" value="UniProtKB-KW"/>
</dbReference>
<proteinExistence type="evidence at protein level"/>
<keyword id="KW-0186">Copper</keyword>
<keyword id="KW-0903">Direct protein sequencing</keyword>
<keyword id="KW-0561">Oxygen transport</keyword>
<keyword id="KW-0964">Secreted</keyword>
<keyword id="KW-0813">Transport</keyword>
<reference evidence="1" key="1">
    <citation type="journal article" date="1999" name="Comp. Biochem. Physiol.">
        <title>Subunit composition and N-terminal analysis of arthropod hemocyanins.</title>
        <authorList>
            <person name="Stoeva S."/>
            <person name="Dolashka P."/>
            <person name="Hristova R."/>
            <person name="Genov N."/>
            <person name="Voelter W."/>
        </authorList>
    </citation>
    <scope>PROTEIN SEQUENCE</scope>
</reference>
<organism evidence="1">
    <name type="scientific">Homarus americanus</name>
    <name type="common">American lobster</name>
    <dbReference type="NCBI Taxonomy" id="6706"/>
    <lineage>
        <taxon>Eukaryota</taxon>
        <taxon>Metazoa</taxon>
        <taxon>Ecdysozoa</taxon>
        <taxon>Arthropoda</taxon>
        <taxon>Crustacea</taxon>
        <taxon>Multicrustacea</taxon>
        <taxon>Malacostraca</taxon>
        <taxon>Eumalacostraca</taxon>
        <taxon>Eucarida</taxon>
        <taxon>Decapoda</taxon>
        <taxon>Pleocyemata</taxon>
        <taxon>Astacidea</taxon>
        <taxon>Nephropoidea</taxon>
        <taxon>Nephropidae</taxon>
        <taxon>Homarus</taxon>
    </lineage>
</organism>
<protein>
    <recommendedName>
        <fullName>Hemocyanin subunit 2</fullName>
    </recommendedName>
</protein>